<organism>
    <name type="scientific">Yersinia pestis (strain Pestoides F)</name>
    <dbReference type="NCBI Taxonomy" id="386656"/>
    <lineage>
        <taxon>Bacteria</taxon>
        <taxon>Pseudomonadati</taxon>
        <taxon>Pseudomonadota</taxon>
        <taxon>Gammaproteobacteria</taxon>
        <taxon>Enterobacterales</taxon>
        <taxon>Yersiniaceae</taxon>
        <taxon>Yersinia</taxon>
    </lineage>
</organism>
<proteinExistence type="inferred from homology"/>
<gene>
    <name evidence="1" type="primary">thrS</name>
    <name type="ordered locus">YPDSF_0717</name>
</gene>
<feature type="chain" id="PRO_1000020558" description="Threonine--tRNA ligase">
    <location>
        <begin position="1"/>
        <end position="642"/>
    </location>
</feature>
<feature type="domain" description="TGS" evidence="2">
    <location>
        <begin position="1"/>
        <end position="61"/>
    </location>
</feature>
<feature type="region of interest" description="Catalytic" evidence="1">
    <location>
        <begin position="243"/>
        <end position="534"/>
    </location>
</feature>
<feature type="binding site" evidence="1">
    <location>
        <position position="334"/>
    </location>
    <ligand>
        <name>Zn(2+)</name>
        <dbReference type="ChEBI" id="CHEBI:29105"/>
    </ligand>
</feature>
<feature type="binding site" evidence="1">
    <location>
        <position position="385"/>
    </location>
    <ligand>
        <name>Zn(2+)</name>
        <dbReference type="ChEBI" id="CHEBI:29105"/>
    </ligand>
</feature>
<feature type="binding site" evidence="1">
    <location>
        <position position="511"/>
    </location>
    <ligand>
        <name>Zn(2+)</name>
        <dbReference type="ChEBI" id="CHEBI:29105"/>
    </ligand>
</feature>
<name>SYT_YERPP</name>
<evidence type="ECO:0000255" key="1">
    <source>
        <dbReference type="HAMAP-Rule" id="MF_00184"/>
    </source>
</evidence>
<evidence type="ECO:0000255" key="2">
    <source>
        <dbReference type="PROSITE-ProRule" id="PRU01228"/>
    </source>
</evidence>
<sequence length="642" mass="73655">MPVITLPDGSQRHYDHAVSVLDVALDIGPGLAKACIAGRVNGELVDASDLIESDAQLAIITAKDAEGLEILRHSCAHLLGHAIKQLWPDTKMAIGPVIDNGFYYDVDIEHTLTQEDLALLEKRMHELADKDYDVIKKKVSWQEARDTFAARGEDYKVAILDENISRDDRPGLYHHEEYVDMCRGPHVPNMRFCHHFKLQKTSGAYWRGDSKNKMLQRIYGTAWGDKKQLNAYLQRLEEAAKRDHRKIGKQLDLYHMQEEAPGMVFWHNDGWTIFRELETFVRMKLKEYQYQEVKGPFMMDRVLWEKTGHWENYAEHMFTTSSENREYCIKPMNCPGHVQIFNQGLKSYRDLPLRMAEFGSCHRNEPSGALHGLMRVRGFTQDDAHVFCTEEQVRDEVNSCIKMVYDMYSTFGFEKIVVKLSTRPEKRIGSDELWTRAEDDLAAALTENGIPFDYQPGEGAFYGPKIEFTLHDCLDRAWQCGTVQLDFSLPGRLSASYIGENNDRQVPVMIHRAILGSMERFIGILTEEYAGFFPTWLAPVQVVVMNITDSQSDYVQQVTKKLQDAGIRAKADLRNEKIGFKIREHTLRRVPYMLVCGDKEVESGKIAVRTRRGKDLGSLDVNVVVDQLLAEIRSRSLHQLEE</sequence>
<comment type="function">
    <text evidence="1">Catalyzes the attachment of threonine to tRNA(Thr) in a two-step reaction: L-threonine is first activated by ATP to form Thr-AMP and then transferred to the acceptor end of tRNA(Thr). Also edits incorrectly charged L-seryl-tRNA(Thr).</text>
</comment>
<comment type="catalytic activity">
    <reaction evidence="1">
        <text>tRNA(Thr) + L-threonine + ATP = L-threonyl-tRNA(Thr) + AMP + diphosphate + H(+)</text>
        <dbReference type="Rhea" id="RHEA:24624"/>
        <dbReference type="Rhea" id="RHEA-COMP:9670"/>
        <dbReference type="Rhea" id="RHEA-COMP:9704"/>
        <dbReference type="ChEBI" id="CHEBI:15378"/>
        <dbReference type="ChEBI" id="CHEBI:30616"/>
        <dbReference type="ChEBI" id="CHEBI:33019"/>
        <dbReference type="ChEBI" id="CHEBI:57926"/>
        <dbReference type="ChEBI" id="CHEBI:78442"/>
        <dbReference type="ChEBI" id="CHEBI:78534"/>
        <dbReference type="ChEBI" id="CHEBI:456215"/>
        <dbReference type="EC" id="6.1.1.3"/>
    </reaction>
</comment>
<comment type="cofactor">
    <cofactor evidence="1">
        <name>Zn(2+)</name>
        <dbReference type="ChEBI" id="CHEBI:29105"/>
    </cofactor>
    <text evidence="1">Binds 1 zinc ion per subunit.</text>
</comment>
<comment type="subunit">
    <text evidence="1">Homodimer.</text>
</comment>
<comment type="subcellular location">
    <subcellularLocation>
        <location evidence="1">Cytoplasm</location>
    </subcellularLocation>
</comment>
<comment type="similarity">
    <text evidence="1">Belongs to the class-II aminoacyl-tRNA synthetase family.</text>
</comment>
<reference key="1">
    <citation type="submission" date="2007-02" db="EMBL/GenBank/DDBJ databases">
        <title>Complete sequence of chromosome of Yersinia pestis Pestoides F.</title>
        <authorList>
            <consortium name="US DOE Joint Genome Institute"/>
            <person name="Copeland A."/>
            <person name="Lucas S."/>
            <person name="Lapidus A."/>
            <person name="Barry K."/>
            <person name="Detter J.C."/>
            <person name="Glavina del Rio T."/>
            <person name="Hammon N."/>
            <person name="Israni S."/>
            <person name="Dalin E."/>
            <person name="Tice H."/>
            <person name="Pitluck S."/>
            <person name="Di Bartolo G."/>
            <person name="Chain P."/>
            <person name="Malfatti S."/>
            <person name="Shin M."/>
            <person name="Vergez L."/>
            <person name="Schmutz J."/>
            <person name="Larimer F."/>
            <person name="Land M."/>
            <person name="Hauser L."/>
            <person name="Worsham P."/>
            <person name="Chu M."/>
            <person name="Bearden S."/>
            <person name="Garcia E."/>
            <person name="Richardson P."/>
        </authorList>
    </citation>
    <scope>NUCLEOTIDE SEQUENCE [LARGE SCALE GENOMIC DNA]</scope>
    <source>
        <strain>Pestoides F</strain>
    </source>
</reference>
<keyword id="KW-0030">Aminoacyl-tRNA synthetase</keyword>
<keyword id="KW-0067">ATP-binding</keyword>
<keyword id="KW-0963">Cytoplasm</keyword>
<keyword id="KW-0436">Ligase</keyword>
<keyword id="KW-0479">Metal-binding</keyword>
<keyword id="KW-0547">Nucleotide-binding</keyword>
<keyword id="KW-0648">Protein biosynthesis</keyword>
<keyword id="KW-0694">RNA-binding</keyword>
<keyword id="KW-0820">tRNA-binding</keyword>
<keyword id="KW-0862">Zinc</keyword>
<dbReference type="EC" id="6.1.1.3" evidence="1"/>
<dbReference type="EMBL" id="CP000668">
    <property type="protein sequence ID" value="ABP39123.1"/>
    <property type="molecule type" value="Genomic_DNA"/>
</dbReference>
<dbReference type="RefSeq" id="WP_002211836.1">
    <property type="nucleotide sequence ID" value="NZ_CP009715.1"/>
</dbReference>
<dbReference type="SMR" id="A4TIL1"/>
<dbReference type="GeneID" id="57976245"/>
<dbReference type="KEGG" id="ypp:YPDSF_0717"/>
<dbReference type="PATRIC" id="fig|386656.14.peg.3153"/>
<dbReference type="GO" id="GO:0005829">
    <property type="term" value="C:cytosol"/>
    <property type="evidence" value="ECO:0007669"/>
    <property type="project" value="TreeGrafter"/>
</dbReference>
<dbReference type="GO" id="GO:0005524">
    <property type="term" value="F:ATP binding"/>
    <property type="evidence" value="ECO:0007669"/>
    <property type="project" value="UniProtKB-UniRule"/>
</dbReference>
<dbReference type="GO" id="GO:0046872">
    <property type="term" value="F:metal ion binding"/>
    <property type="evidence" value="ECO:0007669"/>
    <property type="project" value="UniProtKB-KW"/>
</dbReference>
<dbReference type="GO" id="GO:0004829">
    <property type="term" value="F:threonine-tRNA ligase activity"/>
    <property type="evidence" value="ECO:0007669"/>
    <property type="project" value="UniProtKB-UniRule"/>
</dbReference>
<dbReference type="GO" id="GO:0000049">
    <property type="term" value="F:tRNA binding"/>
    <property type="evidence" value="ECO:0007669"/>
    <property type="project" value="UniProtKB-KW"/>
</dbReference>
<dbReference type="GO" id="GO:0006435">
    <property type="term" value="P:threonyl-tRNA aminoacylation"/>
    <property type="evidence" value="ECO:0007669"/>
    <property type="project" value="UniProtKB-UniRule"/>
</dbReference>
<dbReference type="CDD" id="cd01667">
    <property type="entry name" value="TGS_ThrRS"/>
    <property type="match status" value="1"/>
</dbReference>
<dbReference type="CDD" id="cd00860">
    <property type="entry name" value="ThrRS_anticodon"/>
    <property type="match status" value="1"/>
</dbReference>
<dbReference type="CDD" id="cd00771">
    <property type="entry name" value="ThrRS_core"/>
    <property type="match status" value="1"/>
</dbReference>
<dbReference type="FunFam" id="3.10.20.30:FF:000005">
    <property type="entry name" value="Threonine--tRNA ligase"/>
    <property type="match status" value="1"/>
</dbReference>
<dbReference type="FunFam" id="3.30.54.20:FF:000002">
    <property type="entry name" value="Threonine--tRNA ligase"/>
    <property type="match status" value="1"/>
</dbReference>
<dbReference type="FunFam" id="3.30.930.10:FF:000002">
    <property type="entry name" value="Threonine--tRNA ligase"/>
    <property type="match status" value="1"/>
</dbReference>
<dbReference type="FunFam" id="3.40.50.800:FF:000001">
    <property type="entry name" value="Threonine--tRNA ligase"/>
    <property type="match status" value="1"/>
</dbReference>
<dbReference type="FunFam" id="3.30.980.10:FF:000005">
    <property type="entry name" value="Threonyl-tRNA synthetase, mitochondrial"/>
    <property type="match status" value="1"/>
</dbReference>
<dbReference type="Gene3D" id="3.10.20.30">
    <property type="match status" value="1"/>
</dbReference>
<dbReference type="Gene3D" id="3.30.54.20">
    <property type="match status" value="1"/>
</dbReference>
<dbReference type="Gene3D" id="3.40.50.800">
    <property type="entry name" value="Anticodon-binding domain"/>
    <property type="match status" value="1"/>
</dbReference>
<dbReference type="Gene3D" id="3.30.930.10">
    <property type="entry name" value="Bira Bifunctional Protein, Domain 2"/>
    <property type="match status" value="1"/>
</dbReference>
<dbReference type="Gene3D" id="3.30.980.10">
    <property type="entry name" value="Threonyl-trna Synthetase, Chain A, domain 2"/>
    <property type="match status" value="1"/>
</dbReference>
<dbReference type="HAMAP" id="MF_00184">
    <property type="entry name" value="Thr_tRNA_synth"/>
    <property type="match status" value="1"/>
</dbReference>
<dbReference type="InterPro" id="IPR002314">
    <property type="entry name" value="aa-tRNA-synt_IIb"/>
</dbReference>
<dbReference type="InterPro" id="IPR006195">
    <property type="entry name" value="aa-tRNA-synth_II"/>
</dbReference>
<dbReference type="InterPro" id="IPR045864">
    <property type="entry name" value="aa-tRNA-synth_II/BPL/LPL"/>
</dbReference>
<dbReference type="InterPro" id="IPR004154">
    <property type="entry name" value="Anticodon-bd"/>
</dbReference>
<dbReference type="InterPro" id="IPR036621">
    <property type="entry name" value="Anticodon-bd_dom_sf"/>
</dbReference>
<dbReference type="InterPro" id="IPR012675">
    <property type="entry name" value="Beta-grasp_dom_sf"/>
</dbReference>
<dbReference type="InterPro" id="IPR004095">
    <property type="entry name" value="TGS"/>
</dbReference>
<dbReference type="InterPro" id="IPR012676">
    <property type="entry name" value="TGS-like"/>
</dbReference>
<dbReference type="InterPro" id="IPR002320">
    <property type="entry name" value="Thr-tRNA-ligase_IIa"/>
</dbReference>
<dbReference type="InterPro" id="IPR018163">
    <property type="entry name" value="Thr/Ala-tRNA-synth_IIc_edit"/>
</dbReference>
<dbReference type="InterPro" id="IPR047246">
    <property type="entry name" value="ThrRS_anticodon"/>
</dbReference>
<dbReference type="InterPro" id="IPR033728">
    <property type="entry name" value="ThrRS_core"/>
</dbReference>
<dbReference type="InterPro" id="IPR012947">
    <property type="entry name" value="tRNA_SAD"/>
</dbReference>
<dbReference type="NCBIfam" id="TIGR00418">
    <property type="entry name" value="thrS"/>
    <property type="match status" value="1"/>
</dbReference>
<dbReference type="PANTHER" id="PTHR11451:SF44">
    <property type="entry name" value="THREONINE--TRNA LIGASE, CHLOROPLASTIC_MITOCHONDRIAL 2"/>
    <property type="match status" value="1"/>
</dbReference>
<dbReference type="PANTHER" id="PTHR11451">
    <property type="entry name" value="THREONINE-TRNA LIGASE"/>
    <property type="match status" value="1"/>
</dbReference>
<dbReference type="Pfam" id="PF03129">
    <property type="entry name" value="HGTP_anticodon"/>
    <property type="match status" value="1"/>
</dbReference>
<dbReference type="Pfam" id="PF02824">
    <property type="entry name" value="TGS"/>
    <property type="match status" value="1"/>
</dbReference>
<dbReference type="Pfam" id="PF00587">
    <property type="entry name" value="tRNA-synt_2b"/>
    <property type="match status" value="1"/>
</dbReference>
<dbReference type="Pfam" id="PF07973">
    <property type="entry name" value="tRNA_SAD"/>
    <property type="match status" value="1"/>
</dbReference>
<dbReference type="PRINTS" id="PR01047">
    <property type="entry name" value="TRNASYNTHTHR"/>
</dbReference>
<dbReference type="SMART" id="SM00863">
    <property type="entry name" value="tRNA_SAD"/>
    <property type="match status" value="1"/>
</dbReference>
<dbReference type="SUPFAM" id="SSF52954">
    <property type="entry name" value="Class II aaRS ABD-related"/>
    <property type="match status" value="1"/>
</dbReference>
<dbReference type="SUPFAM" id="SSF55681">
    <property type="entry name" value="Class II aaRS and biotin synthetases"/>
    <property type="match status" value="1"/>
</dbReference>
<dbReference type="SUPFAM" id="SSF81271">
    <property type="entry name" value="TGS-like"/>
    <property type="match status" value="1"/>
</dbReference>
<dbReference type="SUPFAM" id="SSF55186">
    <property type="entry name" value="ThrRS/AlaRS common domain"/>
    <property type="match status" value="1"/>
</dbReference>
<dbReference type="PROSITE" id="PS50862">
    <property type="entry name" value="AA_TRNA_LIGASE_II"/>
    <property type="match status" value="1"/>
</dbReference>
<dbReference type="PROSITE" id="PS51880">
    <property type="entry name" value="TGS"/>
    <property type="match status" value="1"/>
</dbReference>
<accession>A4TIL1</accession>
<protein>
    <recommendedName>
        <fullName evidence="1">Threonine--tRNA ligase</fullName>
        <ecNumber evidence="1">6.1.1.3</ecNumber>
    </recommendedName>
    <alternativeName>
        <fullName evidence="1">Threonyl-tRNA synthetase</fullName>
        <shortName evidence="1">ThrRS</shortName>
    </alternativeName>
</protein>